<reference key="1">
    <citation type="submission" date="2005-09" db="EMBL/GenBank/DDBJ databases">
        <title>Annotation of the Aspergillus terreus NIH2624 genome.</title>
        <authorList>
            <person name="Birren B.W."/>
            <person name="Lander E.S."/>
            <person name="Galagan J.E."/>
            <person name="Nusbaum C."/>
            <person name="Devon K."/>
            <person name="Henn M."/>
            <person name="Ma L.-J."/>
            <person name="Jaffe D.B."/>
            <person name="Butler J."/>
            <person name="Alvarez P."/>
            <person name="Gnerre S."/>
            <person name="Grabherr M."/>
            <person name="Kleber M."/>
            <person name="Mauceli E.W."/>
            <person name="Brockman W."/>
            <person name="Rounsley S."/>
            <person name="Young S.K."/>
            <person name="LaButti K."/>
            <person name="Pushparaj V."/>
            <person name="DeCaprio D."/>
            <person name="Crawford M."/>
            <person name="Koehrsen M."/>
            <person name="Engels R."/>
            <person name="Montgomery P."/>
            <person name="Pearson M."/>
            <person name="Howarth C."/>
            <person name="Larson L."/>
            <person name="Luoma S."/>
            <person name="White J."/>
            <person name="Alvarado L."/>
            <person name="Kodira C.D."/>
            <person name="Zeng Q."/>
            <person name="Oleary S."/>
            <person name="Yandava C."/>
            <person name="Denning D.W."/>
            <person name="Nierman W.C."/>
            <person name="Milne T."/>
            <person name="Madden K."/>
        </authorList>
    </citation>
    <scope>NUCLEOTIDE SEQUENCE [LARGE SCALE GENOMIC DNA]</scope>
    <source>
        <strain>NIH 2624 / FGSC A1156</strain>
    </source>
</reference>
<feature type="chain" id="PRO_0000361923" description="Kynurenine 3-monooxygenase">
    <location>
        <begin position="1"/>
        <end position="500"/>
    </location>
</feature>
<name>KMO_ASPTN</name>
<keyword id="KW-0274">FAD</keyword>
<keyword id="KW-0285">Flavoprotein</keyword>
<keyword id="KW-0472">Membrane</keyword>
<keyword id="KW-0496">Mitochondrion</keyword>
<keyword id="KW-1000">Mitochondrion outer membrane</keyword>
<keyword id="KW-0503">Monooxygenase</keyword>
<keyword id="KW-0521">NADP</keyword>
<keyword id="KW-0560">Oxidoreductase</keyword>
<keyword id="KW-0662">Pyridine nucleotide biosynthesis</keyword>
<keyword id="KW-1185">Reference proteome</keyword>
<accession>Q0CRI5</accession>
<protein>
    <recommendedName>
        <fullName evidence="1">Kynurenine 3-monooxygenase</fullName>
        <ecNumber evidence="1">1.14.13.9</ecNumber>
    </recommendedName>
    <alternativeName>
        <fullName evidence="1">Biosynthesis of nicotinic acid protein 4</fullName>
    </alternativeName>
    <alternativeName>
        <fullName evidence="1">Kynurenine 3-hydroxylase</fullName>
    </alternativeName>
</protein>
<gene>
    <name type="primary">bna4</name>
    <name type="ORF">ATEG_03699</name>
</gene>
<dbReference type="EC" id="1.14.13.9" evidence="1"/>
<dbReference type="EMBL" id="CH476598">
    <property type="protein sequence ID" value="EAU35501.1"/>
    <property type="molecule type" value="Genomic_DNA"/>
</dbReference>
<dbReference type="RefSeq" id="XP_001212877.1">
    <property type="nucleotide sequence ID" value="XM_001212877.1"/>
</dbReference>
<dbReference type="SMR" id="Q0CRI5"/>
<dbReference type="STRING" id="341663.Q0CRI5"/>
<dbReference type="EnsemblFungi" id="EAU35501">
    <property type="protein sequence ID" value="EAU35501"/>
    <property type="gene ID" value="ATEG_03699"/>
</dbReference>
<dbReference type="GeneID" id="4318193"/>
<dbReference type="VEuPathDB" id="FungiDB:ATEG_03699"/>
<dbReference type="eggNOG" id="KOG2614">
    <property type="taxonomic scope" value="Eukaryota"/>
</dbReference>
<dbReference type="HOGENOM" id="CLU_023210_2_1_1"/>
<dbReference type="OMA" id="REFMFIA"/>
<dbReference type="OrthoDB" id="10053569at2759"/>
<dbReference type="UniPathway" id="UPA00253">
    <property type="reaction ID" value="UER00328"/>
</dbReference>
<dbReference type="Proteomes" id="UP000007963">
    <property type="component" value="Unassembled WGS sequence"/>
</dbReference>
<dbReference type="GO" id="GO:0005741">
    <property type="term" value="C:mitochondrial outer membrane"/>
    <property type="evidence" value="ECO:0007669"/>
    <property type="project" value="UniProtKB-SubCell"/>
</dbReference>
<dbReference type="GO" id="GO:0071949">
    <property type="term" value="F:FAD binding"/>
    <property type="evidence" value="ECO:0007669"/>
    <property type="project" value="InterPro"/>
</dbReference>
<dbReference type="GO" id="GO:0004502">
    <property type="term" value="F:kynurenine 3-monooxygenase activity"/>
    <property type="evidence" value="ECO:0007669"/>
    <property type="project" value="UniProtKB-UniRule"/>
</dbReference>
<dbReference type="GO" id="GO:0034354">
    <property type="term" value="P:'de novo' NAD biosynthetic process from L-tryptophan"/>
    <property type="evidence" value="ECO:0007669"/>
    <property type="project" value="UniProtKB-UniRule"/>
</dbReference>
<dbReference type="GO" id="GO:0043420">
    <property type="term" value="P:anthranilate metabolic process"/>
    <property type="evidence" value="ECO:0007669"/>
    <property type="project" value="UniProtKB-UniRule"/>
</dbReference>
<dbReference type="GO" id="GO:0070189">
    <property type="term" value="P:kynurenine metabolic process"/>
    <property type="evidence" value="ECO:0007669"/>
    <property type="project" value="TreeGrafter"/>
</dbReference>
<dbReference type="GO" id="GO:0006569">
    <property type="term" value="P:L-tryptophan catabolic process"/>
    <property type="evidence" value="ECO:0007669"/>
    <property type="project" value="UniProtKB-UniRule"/>
</dbReference>
<dbReference type="GO" id="GO:0019805">
    <property type="term" value="P:quinolinate biosynthetic process"/>
    <property type="evidence" value="ECO:0007669"/>
    <property type="project" value="UniProtKB-UniRule"/>
</dbReference>
<dbReference type="FunFam" id="3.50.50.60:FF:000129">
    <property type="entry name" value="Kynurenine 3-monooxygenase"/>
    <property type="match status" value="1"/>
</dbReference>
<dbReference type="Gene3D" id="3.50.50.60">
    <property type="entry name" value="FAD/NAD(P)-binding domain"/>
    <property type="match status" value="1"/>
</dbReference>
<dbReference type="HAMAP" id="MF_01971">
    <property type="entry name" value="Kynurenine_monooxygenase"/>
    <property type="match status" value="1"/>
</dbReference>
<dbReference type="InterPro" id="IPR002938">
    <property type="entry name" value="FAD-bd"/>
</dbReference>
<dbReference type="InterPro" id="IPR036188">
    <property type="entry name" value="FAD/NAD-bd_sf"/>
</dbReference>
<dbReference type="InterPro" id="IPR027545">
    <property type="entry name" value="Kynurenine_monooxygenase"/>
</dbReference>
<dbReference type="PANTHER" id="PTHR46028">
    <property type="entry name" value="KYNURENINE 3-MONOOXYGENASE"/>
    <property type="match status" value="1"/>
</dbReference>
<dbReference type="PANTHER" id="PTHR46028:SF2">
    <property type="entry name" value="KYNURENINE 3-MONOOXYGENASE"/>
    <property type="match status" value="1"/>
</dbReference>
<dbReference type="Pfam" id="PF01494">
    <property type="entry name" value="FAD_binding_3"/>
    <property type="match status" value="1"/>
</dbReference>
<dbReference type="PRINTS" id="PR00420">
    <property type="entry name" value="RNGMNOXGNASE"/>
</dbReference>
<dbReference type="SUPFAM" id="SSF51905">
    <property type="entry name" value="FAD/NAD(P)-binding domain"/>
    <property type="match status" value="1"/>
</dbReference>
<evidence type="ECO:0000255" key="1">
    <source>
        <dbReference type="HAMAP-Rule" id="MF_03018"/>
    </source>
</evidence>
<sequence length="500" mass="56617">MAQSTKQKVVIVGAGPVGSLAALYAAARGDEVEVYELRGDLRDPSTIPLNFTKSINLALSERGINAMRHSNREEMIHKVLEEAIPMHGRMIHGRDDGKLWEAAQAYDVHGRYINAADRSTLNNALLDELERTPNVNLFFNHKLTGADFRANKAWFERRIPGESTSDRVEIQVNFDYLIGADGAHSASRYHMMKYARVDYQQEYIDTLWCEFRIPPTDDGDFRISPNHLHIWPGKEFMFIALPSADKSFTCTLFAPAGHYARLKSSPQNLLESFDTHFPGVCPELITPKDLQEQFETNPHLPLISIKCKPHHFDSSVVIVGDAAHAVLPFYGQGLNAGLEDIRVLFEIMDKHGVYNPDISPEMRTLSRQAAFQAYTDQRIADAHAINDLSKQNYLEMRWGVKLPLYKLRKSIEETLDRYVPSLGWQTQYARVSFSNQRYSEVIKAVRRQGRLLGFGFISAIVSGVAVVGILAWKRPREASVLSVLKSSARQLGDVWRSKFR</sequence>
<organism>
    <name type="scientific">Aspergillus terreus (strain NIH 2624 / FGSC A1156)</name>
    <dbReference type="NCBI Taxonomy" id="341663"/>
    <lineage>
        <taxon>Eukaryota</taxon>
        <taxon>Fungi</taxon>
        <taxon>Dikarya</taxon>
        <taxon>Ascomycota</taxon>
        <taxon>Pezizomycotina</taxon>
        <taxon>Eurotiomycetes</taxon>
        <taxon>Eurotiomycetidae</taxon>
        <taxon>Eurotiales</taxon>
        <taxon>Aspergillaceae</taxon>
        <taxon>Aspergillus</taxon>
        <taxon>Aspergillus subgen. Circumdati</taxon>
    </lineage>
</organism>
<comment type="function">
    <text evidence="1">Catalyzes the hydroxylation of L-kynurenine (L-Kyn) to form 3-hydroxy-L-kynurenine (L-3OHKyn). Required for synthesis of quinolinic acid.</text>
</comment>
<comment type="catalytic activity">
    <reaction evidence="1">
        <text>L-kynurenine + NADPH + O2 + H(+) = 3-hydroxy-L-kynurenine + NADP(+) + H2O</text>
        <dbReference type="Rhea" id="RHEA:20545"/>
        <dbReference type="ChEBI" id="CHEBI:15377"/>
        <dbReference type="ChEBI" id="CHEBI:15378"/>
        <dbReference type="ChEBI" id="CHEBI:15379"/>
        <dbReference type="ChEBI" id="CHEBI:57783"/>
        <dbReference type="ChEBI" id="CHEBI:57959"/>
        <dbReference type="ChEBI" id="CHEBI:58125"/>
        <dbReference type="ChEBI" id="CHEBI:58349"/>
        <dbReference type="EC" id="1.14.13.9"/>
    </reaction>
</comment>
<comment type="cofactor">
    <cofactor evidence="1">
        <name>FAD</name>
        <dbReference type="ChEBI" id="CHEBI:57692"/>
    </cofactor>
</comment>
<comment type="pathway">
    <text evidence="1">Cofactor biosynthesis; NAD(+) biosynthesis; quinolinate from L-kynurenine: step 1/3.</text>
</comment>
<comment type="subcellular location">
    <subcellularLocation>
        <location evidence="1">Mitochondrion outer membrane</location>
    </subcellularLocation>
</comment>
<comment type="similarity">
    <text evidence="1">Belongs to the aromatic-ring hydroxylase family. KMO subfamily.</text>
</comment>
<proteinExistence type="inferred from homology"/>